<feature type="chain" id="PRO_1000186711" description="3-octaprenyl-4-hydroxybenzoate carboxy-lyase">
    <location>
        <begin position="1"/>
        <end position="508"/>
    </location>
</feature>
<feature type="active site" description="Proton donor" evidence="1">
    <location>
        <position position="303"/>
    </location>
</feature>
<feature type="binding site" evidence="1">
    <location>
        <position position="178"/>
    </location>
    <ligand>
        <name>Mn(2+)</name>
        <dbReference type="ChEBI" id="CHEBI:29035"/>
    </ligand>
</feature>
<feature type="binding site" evidence="1">
    <location>
        <begin position="181"/>
        <end position="183"/>
    </location>
    <ligand>
        <name>prenylated FMN</name>
        <dbReference type="ChEBI" id="CHEBI:87746"/>
    </ligand>
</feature>
<feature type="binding site" evidence="1">
    <location>
        <begin position="195"/>
        <end position="197"/>
    </location>
    <ligand>
        <name>prenylated FMN</name>
        <dbReference type="ChEBI" id="CHEBI:87746"/>
    </ligand>
</feature>
<feature type="binding site" evidence="1">
    <location>
        <begin position="200"/>
        <end position="201"/>
    </location>
    <ligand>
        <name>prenylated FMN</name>
        <dbReference type="ChEBI" id="CHEBI:87746"/>
    </ligand>
</feature>
<feature type="binding site" evidence="1">
    <location>
        <position position="244"/>
    </location>
    <ligand>
        <name>Mn(2+)</name>
        <dbReference type="ChEBI" id="CHEBI:29035"/>
    </ligand>
</feature>
<name>UBID_CUPTR</name>
<organism>
    <name type="scientific">Cupriavidus taiwanensis (strain DSM 17343 / BCRC 17206 / CCUG 44338 / CIP 107171 / LMG 19424 / R1)</name>
    <name type="common">Ralstonia taiwanensis (strain LMG 19424)</name>
    <dbReference type="NCBI Taxonomy" id="977880"/>
    <lineage>
        <taxon>Bacteria</taxon>
        <taxon>Pseudomonadati</taxon>
        <taxon>Pseudomonadota</taxon>
        <taxon>Betaproteobacteria</taxon>
        <taxon>Burkholderiales</taxon>
        <taxon>Burkholderiaceae</taxon>
        <taxon>Cupriavidus</taxon>
    </lineage>
</organism>
<evidence type="ECO:0000255" key="1">
    <source>
        <dbReference type="HAMAP-Rule" id="MF_01636"/>
    </source>
</evidence>
<accession>B3R5V3</accession>
<dbReference type="EC" id="4.1.1.98" evidence="1"/>
<dbReference type="EMBL" id="CU633749">
    <property type="protein sequence ID" value="CAQ70278.1"/>
    <property type="molecule type" value="Genomic_DNA"/>
</dbReference>
<dbReference type="RefSeq" id="WP_012353580.1">
    <property type="nucleotide sequence ID" value="NC_010528.1"/>
</dbReference>
<dbReference type="SMR" id="B3R5V3"/>
<dbReference type="GeneID" id="29760876"/>
<dbReference type="KEGG" id="cti:RALTA_A2343"/>
<dbReference type="eggNOG" id="COG0043">
    <property type="taxonomic scope" value="Bacteria"/>
</dbReference>
<dbReference type="HOGENOM" id="CLU_023348_4_1_4"/>
<dbReference type="BioCyc" id="CTAI977880:RALTA_RS11380-MONOMER"/>
<dbReference type="UniPathway" id="UPA00232"/>
<dbReference type="Proteomes" id="UP000001692">
    <property type="component" value="Chromosome 1"/>
</dbReference>
<dbReference type="GO" id="GO:0005829">
    <property type="term" value="C:cytosol"/>
    <property type="evidence" value="ECO:0007669"/>
    <property type="project" value="TreeGrafter"/>
</dbReference>
<dbReference type="GO" id="GO:0005886">
    <property type="term" value="C:plasma membrane"/>
    <property type="evidence" value="ECO:0007669"/>
    <property type="project" value="UniProtKB-SubCell"/>
</dbReference>
<dbReference type="GO" id="GO:0008694">
    <property type="term" value="F:3-octaprenyl-4-hydroxybenzoate carboxy-lyase activity"/>
    <property type="evidence" value="ECO:0007669"/>
    <property type="project" value="UniProtKB-UniRule"/>
</dbReference>
<dbReference type="GO" id="GO:0046872">
    <property type="term" value="F:metal ion binding"/>
    <property type="evidence" value="ECO:0007669"/>
    <property type="project" value="UniProtKB-KW"/>
</dbReference>
<dbReference type="GO" id="GO:0006744">
    <property type="term" value="P:ubiquinone biosynthetic process"/>
    <property type="evidence" value="ECO:0007669"/>
    <property type="project" value="UniProtKB-UniRule"/>
</dbReference>
<dbReference type="FunFam" id="3.40.1670.10:FF:000001">
    <property type="entry name" value="3-octaprenyl-4-hydroxybenzoate carboxy-lyase"/>
    <property type="match status" value="1"/>
</dbReference>
<dbReference type="Gene3D" id="1.20.5.570">
    <property type="entry name" value="Single helix bin"/>
    <property type="match status" value="1"/>
</dbReference>
<dbReference type="Gene3D" id="3.40.1670.10">
    <property type="entry name" value="UbiD C-terminal domain-like"/>
    <property type="match status" value="1"/>
</dbReference>
<dbReference type="HAMAP" id="MF_01636">
    <property type="entry name" value="UbiD"/>
    <property type="match status" value="1"/>
</dbReference>
<dbReference type="InterPro" id="IPR002830">
    <property type="entry name" value="UbiD"/>
</dbReference>
<dbReference type="InterPro" id="IPR049381">
    <property type="entry name" value="UbiD-like_C"/>
</dbReference>
<dbReference type="InterPro" id="IPR049383">
    <property type="entry name" value="UbiD-like_N"/>
</dbReference>
<dbReference type="InterPro" id="IPR023677">
    <property type="entry name" value="UbiD_bacteria"/>
</dbReference>
<dbReference type="InterPro" id="IPR048304">
    <property type="entry name" value="UbiD_Rift_dom"/>
</dbReference>
<dbReference type="NCBIfam" id="NF008175">
    <property type="entry name" value="PRK10922.1"/>
    <property type="match status" value="1"/>
</dbReference>
<dbReference type="NCBIfam" id="TIGR00148">
    <property type="entry name" value="UbiD family decarboxylase"/>
    <property type="match status" value="1"/>
</dbReference>
<dbReference type="PANTHER" id="PTHR30108">
    <property type="entry name" value="3-OCTAPRENYL-4-HYDROXYBENZOATE CARBOXY-LYASE-RELATED"/>
    <property type="match status" value="1"/>
</dbReference>
<dbReference type="PANTHER" id="PTHR30108:SF17">
    <property type="entry name" value="FERULIC ACID DECARBOXYLASE 1"/>
    <property type="match status" value="1"/>
</dbReference>
<dbReference type="Pfam" id="PF01977">
    <property type="entry name" value="UbiD"/>
    <property type="match status" value="1"/>
</dbReference>
<dbReference type="Pfam" id="PF20696">
    <property type="entry name" value="UbiD_C"/>
    <property type="match status" value="1"/>
</dbReference>
<dbReference type="Pfam" id="PF20695">
    <property type="entry name" value="UbiD_N"/>
    <property type="match status" value="1"/>
</dbReference>
<dbReference type="SUPFAM" id="SSF50475">
    <property type="entry name" value="FMN-binding split barrel"/>
    <property type="match status" value="1"/>
</dbReference>
<dbReference type="SUPFAM" id="SSF143968">
    <property type="entry name" value="UbiD C-terminal domain-like"/>
    <property type="match status" value="1"/>
</dbReference>
<sequence>MQYKDLRDFIGQLEGLGELRRIARPVSPNLEMTEICDRLLRAGGPAVVFEQPAGAPHGDIYSVPVLANLFGTTRRVAFGMGAESMEDLRDIGRVLSALKEPEPPRGLREAGKLFTLAKSVWDMAPKRVSGPACQEVVWEGNDVDLARLPIQTCWPGDAAPLITWGLVVTKGPHKKRQNLGIYRQQVIGRNQVIMRWLAHRGGALDFREHALANPGKPFPIAVALGADPATILGAVTPVPDTLSEYQFAGLLRGSRTALAGCLTPTLSELSVPASAEIVLEGHIQPDPNHPSGYQHALEGPFGDHTGYYNEQDWFPVFTIDRITMRRDPIYHSTYTGKPPDEPAVLGVALNEVFVPLLQKQFPEITDFYLPPEGCSYRMALVRMKKQYAGHAKRVMFGVWSFLRQFMYTKFIVVVDDDVDVRDWKEVIWAITTRVDPSRDTVLVDNTPIDYLDFASPVSGLGSKMGIDATDKWPGETTREWGTSIAMDAAVKAKVDTLWETLFERPAGR</sequence>
<gene>
    <name evidence="1" type="primary">ubiD</name>
    <name type="ordered locus">RALTA_A2343</name>
</gene>
<reference key="1">
    <citation type="journal article" date="2008" name="Genome Res.">
        <title>Genome sequence of the beta-rhizobium Cupriavidus taiwanensis and comparative genomics of rhizobia.</title>
        <authorList>
            <person name="Amadou C."/>
            <person name="Pascal G."/>
            <person name="Mangenot S."/>
            <person name="Glew M."/>
            <person name="Bontemps C."/>
            <person name="Capela D."/>
            <person name="Carrere S."/>
            <person name="Cruveiller S."/>
            <person name="Dossat C."/>
            <person name="Lajus A."/>
            <person name="Marchetti M."/>
            <person name="Poinsot V."/>
            <person name="Rouy Z."/>
            <person name="Servin B."/>
            <person name="Saad M."/>
            <person name="Schenowitz C."/>
            <person name="Barbe V."/>
            <person name="Batut J."/>
            <person name="Medigue C."/>
            <person name="Masson-Boivin C."/>
        </authorList>
    </citation>
    <scope>NUCLEOTIDE SEQUENCE [LARGE SCALE GENOMIC DNA]</scope>
    <source>
        <strain>DSM 17343 / BCRC 17206 / CCUG 44338 / CIP 107171 / LMG 19424 / R1</strain>
    </source>
</reference>
<protein>
    <recommendedName>
        <fullName evidence="1">3-octaprenyl-4-hydroxybenzoate carboxy-lyase</fullName>
        <ecNumber evidence="1">4.1.1.98</ecNumber>
    </recommendedName>
    <alternativeName>
        <fullName evidence="1">Polyprenyl p-hydroxybenzoate decarboxylase</fullName>
    </alternativeName>
</protein>
<comment type="function">
    <text evidence="1">Catalyzes the decarboxylation of 3-octaprenyl-4-hydroxy benzoate to 2-octaprenylphenol, an intermediate step in ubiquinone biosynthesis.</text>
</comment>
<comment type="catalytic activity">
    <reaction evidence="1">
        <text>a 4-hydroxy-3-(all-trans-polyprenyl)benzoate + H(+) = a 2-(all-trans-polyprenyl)phenol + CO2</text>
        <dbReference type="Rhea" id="RHEA:41680"/>
        <dbReference type="Rhea" id="RHEA-COMP:9514"/>
        <dbReference type="Rhea" id="RHEA-COMP:9516"/>
        <dbReference type="ChEBI" id="CHEBI:1269"/>
        <dbReference type="ChEBI" id="CHEBI:15378"/>
        <dbReference type="ChEBI" id="CHEBI:16526"/>
        <dbReference type="ChEBI" id="CHEBI:78396"/>
        <dbReference type="EC" id="4.1.1.98"/>
    </reaction>
</comment>
<comment type="cofactor">
    <cofactor evidence="1">
        <name>prenylated FMN</name>
        <dbReference type="ChEBI" id="CHEBI:87746"/>
    </cofactor>
    <text evidence="1">Binds 1 prenylated FMN per subunit.</text>
</comment>
<comment type="cofactor">
    <cofactor evidence="1">
        <name>Mn(2+)</name>
        <dbReference type="ChEBI" id="CHEBI:29035"/>
    </cofactor>
</comment>
<comment type="pathway">
    <text evidence="1">Cofactor biosynthesis; ubiquinone biosynthesis.</text>
</comment>
<comment type="subunit">
    <text evidence="1">Homohexamer.</text>
</comment>
<comment type="subcellular location">
    <subcellularLocation>
        <location evidence="1">Cell membrane</location>
        <topology evidence="1">Peripheral membrane protein</topology>
    </subcellularLocation>
</comment>
<comment type="similarity">
    <text evidence="1">Belongs to the UbiD family.</text>
</comment>
<proteinExistence type="inferred from homology"/>
<keyword id="KW-1003">Cell membrane</keyword>
<keyword id="KW-0210">Decarboxylase</keyword>
<keyword id="KW-0285">Flavoprotein</keyword>
<keyword id="KW-0288">FMN</keyword>
<keyword id="KW-0456">Lyase</keyword>
<keyword id="KW-0464">Manganese</keyword>
<keyword id="KW-0472">Membrane</keyword>
<keyword id="KW-0479">Metal-binding</keyword>
<keyword id="KW-0831">Ubiquinone biosynthesis</keyword>